<organism>
    <name type="scientific">Caenorhabditis elegans</name>
    <dbReference type="NCBI Taxonomy" id="6239"/>
    <lineage>
        <taxon>Eukaryota</taxon>
        <taxon>Metazoa</taxon>
        <taxon>Ecdysozoa</taxon>
        <taxon>Nematoda</taxon>
        <taxon>Chromadorea</taxon>
        <taxon>Rhabditida</taxon>
        <taxon>Rhabditina</taxon>
        <taxon>Rhabditomorpha</taxon>
        <taxon>Rhabditoidea</taxon>
        <taxon>Rhabditidae</taxon>
        <taxon>Peloderinae</taxon>
        <taxon>Caenorhabditis</taxon>
    </lineage>
</organism>
<evidence type="ECO:0000255" key="1"/>
<evidence type="ECO:0000255" key="2">
    <source>
        <dbReference type="PROSITE-ProRule" id="PRU01355"/>
    </source>
</evidence>
<evidence type="ECO:0000256" key="3">
    <source>
        <dbReference type="SAM" id="MobiDB-lite"/>
    </source>
</evidence>
<evidence type="ECO:0000269" key="4">
    <source>
    </source>
</evidence>
<evidence type="ECO:0000269" key="5">
    <source>
    </source>
</evidence>
<evidence type="ECO:0000269" key="6">
    <source>
    </source>
</evidence>
<evidence type="ECO:0000269" key="7">
    <source>
    </source>
</evidence>
<evidence type="ECO:0000269" key="8">
    <source>
    </source>
</evidence>
<evidence type="ECO:0000305" key="9"/>
<evidence type="ECO:0000312" key="10">
    <source>
        <dbReference type="WormBase" id="C42D8.5"/>
    </source>
</evidence>
<proteinExistence type="evidence at protein level"/>
<accession>Q18581</accession>
<accession>Q65ZH6</accession>
<name>ACN1_CAEEL</name>
<keyword id="KW-0217">Developmental protein</keyword>
<keyword id="KW-1015">Disulfide bond</keyword>
<keyword id="KW-0325">Glycoprotein</keyword>
<keyword id="KW-1185">Reference proteome</keyword>
<keyword id="KW-0732">Signal</keyword>
<sequence length="906" mass="100725">MKFHILLLLLVGACLPVFTQEIKPKPELLPADEAPKDPEAVFSEGEPFELTDALDTPKNGSVPVPEPEPKPEPEPEPEPKPEPEPSPTPEPEPAIKFDNIESEDYGDVAETAASTQPDELNTEVIEQLVDTFLNTGSIASNKTNKGPVFANPVAQALVNSSNYWKTDNLQAPGSIKDEEKLRSWLAGYEAEAIKVLREVALSGWRYFNDASPSLKLALDEAENVLTMFVRSTSMQAKQFDMASVTDEKVMRQLGYVSFEGMSALAPSRFADYSQAQAALNRDSKDSTICDKDVPPPCALQKIDMDSIFRNEKDASRLQHLWVSYVTAIAKSKPSYNNIITISNEGAKLNGFANGGAMWRSAFDMSSKVHKAEFDLNKQIDKIYSTIQPFYQLLHAYMRRQLAGIYSNPVGLSKDGPIPAHLFGSLDGGDWSAHYEQTKPFEEESETPEAMLSAFNTQNYTTKKMFVTAYRYFKSAGFPHLPKSYWTSSIFARVWSKDMICHPAAALDMRAPNDFRVKACAQLGEPDFEQAHSLLVQTYYQYLYKDQSLLFREQASPVITDAIANAFAHLSTNPHYLYSQKLVPSEHLDIKDSVIINKLYKESLESFTKLPFTIAADNWRYELFDGTVPKNKLNDRWWEIRNKYEGVRSPQPYNTSNLDALIHNSVSQVHSPATRTLISYVLKFQILKALCPEGTILSEGCILSEDTTEKLRETMKLGSSITWLKALEMISGKGELDAQPLLEYYEPLINWLRNTNEIDQVVVGWDGEGTPFTVEEIPKTRQPGDGGNGLPSEDRVAFPGGECVNGQECLLDSHCNGTICVCNDGLYTLEIGNTFNCVPGNPADSGFGDGKGGLVIGLFNNEVTTPEPSAEPEPTAKTTTKMPPRVRAATSPFSLYLTVLLIIYFAL</sequence>
<dbReference type="EMBL" id="FO080659">
    <property type="protein sequence ID" value="CCD65566.1"/>
    <property type="molecule type" value="Genomic_DNA"/>
</dbReference>
<dbReference type="EMBL" id="FO080659">
    <property type="protein sequence ID" value="CCD65567.1"/>
    <property type="molecule type" value="Genomic_DNA"/>
</dbReference>
<dbReference type="PIR" id="T15792">
    <property type="entry name" value="T15792"/>
</dbReference>
<dbReference type="RefSeq" id="NP_001024454.1">
    <property type="nucleotide sequence ID" value="NM_001029283.3"/>
</dbReference>
<dbReference type="SMR" id="Q18581"/>
<dbReference type="BioGRID" id="45715">
    <property type="interactions" value="2"/>
</dbReference>
<dbReference type="FunCoup" id="Q18581">
    <property type="interactions" value="78"/>
</dbReference>
<dbReference type="IntAct" id="Q18581">
    <property type="interactions" value="1"/>
</dbReference>
<dbReference type="MINT" id="Q18581"/>
<dbReference type="STRING" id="6239.C42D8.5a.2"/>
<dbReference type="GlyCosmos" id="Q18581">
    <property type="glycosylation" value="2 sites, No reported glycans"/>
</dbReference>
<dbReference type="iPTMnet" id="Q18581"/>
<dbReference type="PaxDb" id="6239-C42D8.5a"/>
<dbReference type="PeptideAtlas" id="Q18581"/>
<dbReference type="GeneID" id="180780"/>
<dbReference type="KEGG" id="cel:CELE_C42D8.5"/>
<dbReference type="AGR" id="WB:WBGene00000039"/>
<dbReference type="CTD" id="180780"/>
<dbReference type="WormBase" id="C42D8.5">
    <property type="protein sequence ID" value="CE30627"/>
    <property type="gene ID" value="WBGene00000039"/>
    <property type="gene designation" value="acn-1"/>
</dbReference>
<dbReference type="eggNOG" id="KOG3690">
    <property type="taxonomic scope" value="Eukaryota"/>
</dbReference>
<dbReference type="GeneTree" id="ENSGT00940000158077"/>
<dbReference type="HOGENOM" id="CLU_011699_0_0_1"/>
<dbReference type="InParanoid" id="Q18581"/>
<dbReference type="OMA" id="FTVIHHE"/>
<dbReference type="OrthoDB" id="10029630at2759"/>
<dbReference type="PhylomeDB" id="Q18581"/>
<dbReference type="Reactome" id="R-CEL-2022377">
    <property type="pathway name" value="Metabolism of Angiotensinogen to Angiotensins"/>
</dbReference>
<dbReference type="PRO" id="PR:Q18581"/>
<dbReference type="Proteomes" id="UP000001940">
    <property type="component" value="Chromosome X"/>
</dbReference>
<dbReference type="Bgee" id="WBGene00000039">
    <property type="expression patterns" value="Expressed in embryo and 3 other cell types or tissues"/>
</dbReference>
<dbReference type="GO" id="GO:0016020">
    <property type="term" value="C:membrane"/>
    <property type="evidence" value="ECO:0007669"/>
    <property type="project" value="InterPro"/>
</dbReference>
<dbReference type="GO" id="GO:0042395">
    <property type="term" value="P:ecdysis, collagen and cuticulin-based cuticle"/>
    <property type="evidence" value="ECO:0000315"/>
    <property type="project" value="WormBase"/>
</dbReference>
<dbReference type="GO" id="GO:0045138">
    <property type="term" value="P:nematode male tail tip morphogenesis"/>
    <property type="evidence" value="ECO:0000315"/>
    <property type="project" value="WormBase"/>
</dbReference>
<dbReference type="GO" id="GO:0045026">
    <property type="term" value="P:plasma membrane fusion"/>
    <property type="evidence" value="ECO:0000315"/>
    <property type="project" value="WormBase"/>
</dbReference>
<dbReference type="CDD" id="cd06461">
    <property type="entry name" value="M2_ACE"/>
    <property type="match status" value="1"/>
</dbReference>
<dbReference type="InterPro" id="IPR001548">
    <property type="entry name" value="Peptidase_M2"/>
</dbReference>
<dbReference type="PANTHER" id="PTHR10514">
    <property type="entry name" value="ANGIOTENSIN-CONVERTING ENZYME"/>
    <property type="match status" value="1"/>
</dbReference>
<dbReference type="PANTHER" id="PTHR10514:SF27">
    <property type="entry name" value="ANGIOTENSIN-CONVERTING ENZYME"/>
    <property type="match status" value="1"/>
</dbReference>
<dbReference type="Pfam" id="PF01401">
    <property type="entry name" value="Peptidase_M2"/>
    <property type="match status" value="1"/>
</dbReference>
<dbReference type="PRINTS" id="PR00791">
    <property type="entry name" value="PEPDIPTASEA"/>
</dbReference>
<dbReference type="SUPFAM" id="SSF55486">
    <property type="entry name" value="Metalloproteases ('zincins'), catalytic domain"/>
    <property type="match status" value="1"/>
</dbReference>
<dbReference type="PROSITE" id="PS52011">
    <property type="entry name" value="PEPTIDASE_M2"/>
    <property type="match status" value="1"/>
</dbReference>
<protein>
    <recommendedName>
        <fullName>Inactive angiotensin-converting enzyme-related protein</fullName>
    </recommendedName>
    <alternativeName>
        <fullName>ACE-like non-metallopeptidase protein 1</fullName>
    </alternativeName>
</protein>
<comment type="function">
    <text evidence="5 7 8">Inactive as a metallopeptidase, due to a lack of active site residues (PubMed:14559923). Required for larval molting, male tail development, and formation of adult alae (PubMed:14559923). Acts in the heterochronic pathway and plays a role in the developmental timing of postembryonic hypodermal seam cell division and adult alae production (PubMed:28933985). Acts synergistically with apl-1 in let-7 regulated postembryonic cell division events (PubMed:28933985). Might act downstream of the heterochronic protein lin-41 (PubMed:28933985). Negative regulator of lifespan, heat and oxidative stress response and age-related degenerative changes like reduced pharyngeal pumping and decreased body movements (PubMed:26918946). Lifespan restriction is dependent on the forkhead-type transcription factor daf-16 (PubMed:26918946).</text>
</comment>
<comment type="tissue specificity">
    <text evidence="5">Expressed in the hypodermis, in the vulva during organogenesis, and in the ray papillae of the male tail.</text>
</comment>
<comment type="developmental stage">
    <text evidence="5 8">Expressed in embryos and larvae (PubMed:14559923). Expressed in an oscillating expression pattern during larval development, with low expression at the L2 stage, high expression at the L2/L3 transition and low expression at the L3 stage (PubMed:28933985).</text>
</comment>
<comment type="disruption phenotype">
    <text evidence="7 8">RNAi-mediated knockdown results in the extension of mean and maximum lifespan of 21% and 18%, respectively, and increased resistance to oxidative stress caused by paraquat (PubMed:26918946). RNAi-mediated knockdown in a daf-16 mutant background shortens mean and maximum lifespan by 3% and 2%, respectively (PubMed:26918946). RNAi-mediated knockdown in a let-7 mutant background partially suppresses the retarded and supernumerary hypodermal seam cell divisions, retarded alae production and postembryonic lethality (PubMed:28933985). Double RNAi-mediated knockdown with apl-1 in a let-7 mutant phenotype leads to complete suppression of the heterochronic seam cell defects (PubMed:28933985).</text>
</comment>
<comment type="similarity">
    <text evidence="9">Belongs to the peptidase M2 family.</text>
</comment>
<gene>
    <name evidence="10" type="primary">acn-1</name>
    <name evidence="10" type="ORF">C42D8.5</name>
</gene>
<reference key="1">
    <citation type="journal article" date="1998" name="Science">
        <title>Genome sequence of the nematode C. elegans: a platform for investigating biology.</title>
        <authorList>
            <consortium name="The C. elegans sequencing consortium"/>
        </authorList>
    </citation>
    <scope>NUCLEOTIDE SEQUENCE [LARGE SCALE GENOMIC DNA]</scope>
    <source>
        <strain>Bristol N2</strain>
    </source>
</reference>
<reference key="2">
    <citation type="journal article" date="2003" name="J. Biol. Chem.">
        <title>An essential role in molting and morphogenesis of Caenorhabditis elegans for ACN-1, a novel member of the angiotensin-converting enzyme family that lacks a metallopeptidase active site.</title>
        <authorList>
            <person name="Brooks D.R."/>
            <person name="Appleford P.J."/>
            <person name="Murray L."/>
            <person name="Isaac R.E."/>
        </authorList>
    </citation>
    <scope>FUNCTION</scope>
    <scope>TISSUE SPECIFICITY</scope>
    <scope>DEVELOPMENTAL STAGE</scope>
</reference>
<reference key="3">
    <citation type="journal article" date="2003" name="Nat. Biotechnol.">
        <title>Lectin affinity capture, isotope-coded tagging and mass spectrometry to identify N-linked glycoproteins.</title>
        <authorList>
            <person name="Kaji H."/>
            <person name="Saito H."/>
            <person name="Yamauchi Y."/>
            <person name="Shinkawa T."/>
            <person name="Taoka M."/>
            <person name="Hirabayashi J."/>
            <person name="Kasai K."/>
            <person name="Takahashi N."/>
            <person name="Isobe T."/>
        </authorList>
    </citation>
    <scope>GLYCOSYLATION [LARGE SCALE ANALYSIS] AT ASN-159</scope>
    <scope>IDENTIFICATION BY MASS SPECTROMETRY</scope>
    <source>
        <strain>Bristol N2</strain>
    </source>
</reference>
<reference key="4">
    <citation type="journal article" date="2007" name="Mol. Cell. Proteomics">
        <title>Proteomics reveals N-linked glycoprotein diversity in Caenorhabditis elegans and suggests an atypical translocation mechanism for integral membrane proteins.</title>
        <authorList>
            <person name="Kaji H."/>
            <person name="Kamiie J."/>
            <person name="Kawakami H."/>
            <person name="Kido K."/>
            <person name="Yamauchi Y."/>
            <person name="Shinkawa T."/>
            <person name="Taoka M."/>
            <person name="Takahashi N."/>
            <person name="Isobe T."/>
        </authorList>
    </citation>
    <scope>GLYCOSYLATION [LARGE SCALE ANALYSIS] AT ASN-159 AND ASN-653</scope>
    <scope>IDENTIFICATION BY MASS SPECTROMETRY</scope>
    <source>
        <strain>Bristol N2</strain>
    </source>
</reference>
<reference key="5">
    <citation type="journal article" date="2016" name="PLoS Genet.">
        <title>Angiotensin converting enzyme (ACE) inhibitor extends Caenorhabditis elegans life span.</title>
        <authorList>
            <person name="Kumar S."/>
            <person name="Dietrich N."/>
            <person name="Kornfeld K."/>
        </authorList>
    </citation>
    <scope>FUNCTION</scope>
    <scope>DISRUPTION PHENOTYPE</scope>
</reference>
<reference key="6">
    <citation type="journal article" date="2017" name="Cell Cycle">
        <title>acn-1, a C. elegans homologue of ACE, genetically interacts with the let-7 microRNA and other heterochronic genes.</title>
        <authorList>
            <person name="Metheetrairut C."/>
            <person name="Ahuja Y."/>
            <person name="Slack F.J."/>
        </authorList>
    </citation>
    <scope>FUNCTION</scope>
    <scope>DEVELOPMENTAL STAGE</scope>
    <scope>DISRUPTION PHENOTYPE</scope>
</reference>
<feature type="signal peptide" evidence="1">
    <location>
        <begin position="1"/>
        <end position="19"/>
    </location>
</feature>
<feature type="chain" id="PRO_0000028567" description="Inactive angiotensin-converting enzyme-related protein">
    <location>
        <begin position="20"/>
        <end position="906"/>
    </location>
</feature>
<feature type="domain" description="Peptidase M2" evidence="2">
    <location>
        <begin position="175"/>
        <end position="765"/>
    </location>
</feature>
<feature type="region of interest" description="Disordered" evidence="3">
    <location>
        <begin position="28"/>
        <end position="95"/>
    </location>
</feature>
<feature type="region of interest" description="Disordered" evidence="3">
    <location>
        <begin position="862"/>
        <end position="882"/>
    </location>
</feature>
<feature type="compositionally biased region" description="Basic and acidic residues" evidence="3">
    <location>
        <begin position="67"/>
        <end position="83"/>
    </location>
</feature>
<feature type="compositionally biased region" description="Low complexity" evidence="3">
    <location>
        <begin position="863"/>
        <end position="882"/>
    </location>
</feature>
<feature type="glycosylation site" description="N-linked (GlcNAc...) asparagine" evidence="4 6">
    <location>
        <position position="159"/>
    </location>
</feature>
<feature type="glycosylation site" description="N-linked (GlcNAc...) asparagine" evidence="6">
    <location>
        <position position="653"/>
    </location>
</feature>
<feature type="disulfide bond" evidence="2">
    <location>
        <begin position="289"/>
        <end position="297"/>
    </location>
</feature>